<feature type="chain" id="PRO_0000297481" description="Erythronate-4-phosphate dehydrogenase">
    <location>
        <begin position="1"/>
        <end position="375"/>
    </location>
</feature>
<feature type="active site" evidence="1">
    <location>
        <position position="208"/>
    </location>
</feature>
<feature type="active site" evidence="1">
    <location>
        <position position="237"/>
    </location>
</feature>
<feature type="active site" description="Proton donor" evidence="1">
    <location>
        <position position="254"/>
    </location>
</feature>
<feature type="binding site" evidence="1">
    <location>
        <position position="45"/>
    </location>
    <ligand>
        <name>substrate</name>
    </ligand>
</feature>
<feature type="binding site" evidence="1">
    <location>
        <position position="66"/>
    </location>
    <ligand>
        <name>substrate</name>
    </ligand>
</feature>
<feature type="binding site" evidence="1">
    <location>
        <position position="146"/>
    </location>
    <ligand>
        <name>NAD(+)</name>
        <dbReference type="ChEBI" id="CHEBI:57540"/>
    </ligand>
</feature>
<feature type="binding site" evidence="1">
    <location>
        <position position="175"/>
    </location>
    <ligand>
        <name>NAD(+)</name>
        <dbReference type="ChEBI" id="CHEBI:57540"/>
    </ligand>
</feature>
<feature type="binding site" evidence="1">
    <location>
        <position position="232"/>
    </location>
    <ligand>
        <name>NAD(+)</name>
        <dbReference type="ChEBI" id="CHEBI:57540"/>
    </ligand>
</feature>
<feature type="binding site" evidence="1">
    <location>
        <position position="257"/>
    </location>
    <ligand>
        <name>NAD(+)</name>
        <dbReference type="ChEBI" id="CHEBI:57540"/>
    </ligand>
</feature>
<feature type="binding site" evidence="1">
    <location>
        <position position="258"/>
    </location>
    <ligand>
        <name>substrate</name>
    </ligand>
</feature>
<organism>
    <name type="scientific">Yersinia enterocolitica serotype O:8 / biotype 1B (strain NCTC 13174 / 8081)</name>
    <dbReference type="NCBI Taxonomy" id="393305"/>
    <lineage>
        <taxon>Bacteria</taxon>
        <taxon>Pseudomonadati</taxon>
        <taxon>Pseudomonadota</taxon>
        <taxon>Gammaproteobacteria</taxon>
        <taxon>Enterobacterales</taxon>
        <taxon>Yersiniaceae</taxon>
        <taxon>Yersinia</taxon>
    </lineage>
</organism>
<proteinExistence type="inferred from homology"/>
<comment type="function">
    <text evidence="1">Catalyzes the oxidation of erythronate-4-phosphate to 3-hydroxy-2-oxo-4-phosphonooxybutanoate.</text>
</comment>
<comment type="catalytic activity">
    <reaction evidence="1">
        <text>4-phospho-D-erythronate + NAD(+) = (R)-3-hydroxy-2-oxo-4-phosphooxybutanoate + NADH + H(+)</text>
        <dbReference type="Rhea" id="RHEA:18829"/>
        <dbReference type="ChEBI" id="CHEBI:15378"/>
        <dbReference type="ChEBI" id="CHEBI:57540"/>
        <dbReference type="ChEBI" id="CHEBI:57945"/>
        <dbReference type="ChEBI" id="CHEBI:58538"/>
        <dbReference type="ChEBI" id="CHEBI:58766"/>
        <dbReference type="EC" id="1.1.1.290"/>
    </reaction>
</comment>
<comment type="pathway">
    <text evidence="1">Cofactor biosynthesis; pyridoxine 5'-phosphate biosynthesis; pyridoxine 5'-phosphate from D-erythrose 4-phosphate: step 2/5.</text>
</comment>
<comment type="subunit">
    <text evidence="1">Homodimer.</text>
</comment>
<comment type="subcellular location">
    <subcellularLocation>
        <location evidence="1">Cytoplasm</location>
    </subcellularLocation>
</comment>
<comment type="similarity">
    <text evidence="1">Belongs to the D-isomer specific 2-hydroxyacid dehydrogenase family. PdxB subfamily.</text>
</comment>
<gene>
    <name evidence="1" type="primary">pdxB</name>
    <name type="ordered locus">YE1307</name>
</gene>
<evidence type="ECO:0000255" key="1">
    <source>
        <dbReference type="HAMAP-Rule" id="MF_01825"/>
    </source>
</evidence>
<protein>
    <recommendedName>
        <fullName evidence="1">Erythronate-4-phosphate dehydrogenase</fullName>
        <ecNumber evidence="1">1.1.1.290</ecNumber>
    </recommendedName>
</protein>
<dbReference type="EC" id="1.1.1.290" evidence="1"/>
<dbReference type="EMBL" id="AM286415">
    <property type="protein sequence ID" value="CAL11399.1"/>
    <property type="molecule type" value="Genomic_DNA"/>
</dbReference>
<dbReference type="RefSeq" id="WP_011815922.1">
    <property type="nucleotide sequence ID" value="NC_008800.1"/>
</dbReference>
<dbReference type="RefSeq" id="YP_001005628.1">
    <property type="nucleotide sequence ID" value="NC_008800.1"/>
</dbReference>
<dbReference type="SMR" id="A1JL55"/>
<dbReference type="KEGG" id="yen:YE1307"/>
<dbReference type="PATRIC" id="fig|393305.7.peg.1418"/>
<dbReference type="eggNOG" id="COG0111">
    <property type="taxonomic scope" value="Bacteria"/>
</dbReference>
<dbReference type="HOGENOM" id="CLU_019796_4_0_6"/>
<dbReference type="OrthoDB" id="9770208at2"/>
<dbReference type="UniPathway" id="UPA00244">
    <property type="reaction ID" value="UER00310"/>
</dbReference>
<dbReference type="Proteomes" id="UP000000642">
    <property type="component" value="Chromosome"/>
</dbReference>
<dbReference type="GO" id="GO:0005829">
    <property type="term" value="C:cytosol"/>
    <property type="evidence" value="ECO:0007669"/>
    <property type="project" value="TreeGrafter"/>
</dbReference>
<dbReference type="GO" id="GO:0033711">
    <property type="term" value="F:4-phosphoerythronate dehydrogenase activity"/>
    <property type="evidence" value="ECO:0007669"/>
    <property type="project" value="UniProtKB-EC"/>
</dbReference>
<dbReference type="GO" id="GO:0051287">
    <property type="term" value="F:NAD binding"/>
    <property type="evidence" value="ECO:0007669"/>
    <property type="project" value="InterPro"/>
</dbReference>
<dbReference type="GO" id="GO:0046983">
    <property type="term" value="F:protein dimerization activity"/>
    <property type="evidence" value="ECO:0007669"/>
    <property type="project" value="InterPro"/>
</dbReference>
<dbReference type="GO" id="GO:0036001">
    <property type="term" value="P:'de novo' pyridoxal 5'-phosphate biosynthetic process"/>
    <property type="evidence" value="ECO:0007669"/>
    <property type="project" value="TreeGrafter"/>
</dbReference>
<dbReference type="GO" id="GO:0008615">
    <property type="term" value="P:pyridoxine biosynthetic process"/>
    <property type="evidence" value="ECO:0007669"/>
    <property type="project" value="UniProtKB-UniRule"/>
</dbReference>
<dbReference type="CDD" id="cd12158">
    <property type="entry name" value="ErythrP_dh"/>
    <property type="match status" value="1"/>
</dbReference>
<dbReference type="FunFam" id="3.40.50.720:FF:000093">
    <property type="entry name" value="Erythronate-4-phosphate dehydrogenase"/>
    <property type="match status" value="1"/>
</dbReference>
<dbReference type="Gene3D" id="3.30.1370.170">
    <property type="match status" value="1"/>
</dbReference>
<dbReference type="Gene3D" id="3.40.50.720">
    <property type="entry name" value="NAD(P)-binding Rossmann-like Domain"/>
    <property type="match status" value="2"/>
</dbReference>
<dbReference type="HAMAP" id="MF_01825">
    <property type="entry name" value="PdxB"/>
    <property type="match status" value="1"/>
</dbReference>
<dbReference type="InterPro" id="IPR006139">
    <property type="entry name" value="D-isomer_2_OHA_DH_cat_dom"/>
</dbReference>
<dbReference type="InterPro" id="IPR029753">
    <property type="entry name" value="D-isomer_DH_CS"/>
</dbReference>
<dbReference type="InterPro" id="IPR029752">
    <property type="entry name" value="D-isomer_DH_CS1"/>
</dbReference>
<dbReference type="InterPro" id="IPR006140">
    <property type="entry name" value="D-isomer_DH_NAD-bd"/>
</dbReference>
<dbReference type="InterPro" id="IPR020921">
    <property type="entry name" value="Erythronate-4-P_DHase"/>
</dbReference>
<dbReference type="InterPro" id="IPR024531">
    <property type="entry name" value="Erythronate-4-P_DHase_dimer"/>
</dbReference>
<dbReference type="InterPro" id="IPR036291">
    <property type="entry name" value="NAD(P)-bd_dom_sf"/>
</dbReference>
<dbReference type="InterPro" id="IPR038251">
    <property type="entry name" value="PdxB_dimer_sf"/>
</dbReference>
<dbReference type="NCBIfam" id="NF001309">
    <property type="entry name" value="PRK00257.1"/>
    <property type="match status" value="1"/>
</dbReference>
<dbReference type="PANTHER" id="PTHR42938">
    <property type="entry name" value="FORMATE DEHYDROGENASE 1"/>
    <property type="match status" value="1"/>
</dbReference>
<dbReference type="PANTHER" id="PTHR42938:SF9">
    <property type="entry name" value="FORMATE DEHYDROGENASE 1"/>
    <property type="match status" value="1"/>
</dbReference>
<dbReference type="Pfam" id="PF00389">
    <property type="entry name" value="2-Hacid_dh"/>
    <property type="match status" value="1"/>
</dbReference>
<dbReference type="Pfam" id="PF02826">
    <property type="entry name" value="2-Hacid_dh_C"/>
    <property type="match status" value="1"/>
</dbReference>
<dbReference type="Pfam" id="PF11890">
    <property type="entry name" value="DUF3410"/>
    <property type="match status" value="1"/>
</dbReference>
<dbReference type="SUPFAM" id="SSF52283">
    <property type="entry name" value="Formate/glycerate dehydrogenase catalytic domain-like"/>
    <property type="match status" value="1"/>
</dbReference>
<dbReference type="SUPFAM" id="SSF51735">
    <property type="entry name" value="NAD(P)-binding Rossmann-fold domains"/>
    <property type="match status" value="1"/>
</dbReference>
<dbReference type="PROSITE" id="PS00065">
    <property type="entry name" value="D_2_HYDROXYACID_DH_1"/>
    <property type="match status" value="1"/>
</dbReference>
<dbReference type="PROSITE" id="PS00671">
    <property type="entry name" value="D_2_HYDROXYACID_DH_3"/>
    <property type="match status" value="1"/>
</dbReference>
<accession>A1JL55</accession>
<name>PDXB_YERE8</name>
<sequence>MKILVDENMPYAEALFQQLGDVQAVPGRPIPLDALAGADALMVRSVTKVNEALLQGTSIRFVGTATAGTDHVDDNWLQQQGIGFSAAPGCNAIAVVEYVFSALMMMAERDGFQLRDKTVGIIGVGNVGSRLNARLQALGVRTLLCDPPRADRGDNERFWPLEKLVREADVLTFHTPLNKNGPYQSLHMADDELLAALPDGRILINACRGAVVDNTALLRALEKGKKLSVVLDVWEPEPELSLPLLARVDIGTPHIAGYTLEGKARGTTQVFEAFSQYLGQPQSVELASLLPQPEFSQLRLNGELDEGKLKRLMHLVYDVRRDDAPLRRVADQSGEFDRLRKHYQERREWSSLCVQCDDAASAELLQKLGFSTQLL</sequence>
<keyword id="KW-0963">Cytoplasm</keyword>
<keyword id="KW-0520">NAD</keyword>
<keyword id="KW-0560">Oxidoreductase</keyword>
<keyword id="KW-0664">Pyridoxine biosynthesis</keyword>
<reference key="1">
    <citation type="journal article" date="2006" name="PLoS Genet.">
        <title>The complete genome sequence and comparative genome analysis of the high pathogenicity Yersinia enterocolitica strain 8081.</title>
        <authorList>
            <person name="Thomson N.R."/>
            <person name="Howard S."/>
            <person name="Wren B.W."/>
            <person name="Holden M.T.G."/>
            <person name="Crossman L."/>
            <person name="Challis G.L."/>
            <person name="Churcher C."/>
            <person name="Mungall K."/>
            <person name="Brooks K."/>
            <person name="Chillingworth T."/>
            <person name="Feltwell T."/>
            <person name="Abdellah Z."/>
            <person name="Hauser H."/>
            <person name="Jagels K."/>
            <person name="Maddison M."/>
            <person name="Moule S."/>
            <person name="Sanders M."/>
            <person name="Whitehead S."/>
            <person name="Quail M.A."/>
            <person name="Dougan G."/>
            <person name="Parkhill J."/>
            <person name="Prentice M.B."/>
        </authorList>
    </citation>
    <scope>NUCLEOTIDE SEQUENCE [LARGE SCALE GENOMIC DNA]</scope>
    <source>
        <strain>NCTC 13174 / 8081</strain>
    </source>
</reference>